<dbReference type="EC" id="4.3.2.10" evidence="1"/>
<dbReference type="EMBL" id="AE008923">
    <property type="protein sequence ID" value="AAM36696.1"/>
    <property type="molecule type" value="Genomic_DNA"/>
</dbReference>
<dbReference type="RefSeq" id="WP_011051173.1">
    <property type="nucleotide sequence ID" value="NC_003919.1"/>
</dbReference>
<dbReference type="SMR" id="Q8PLG6"/>
<dbReference type="GeneID" id="66910980"/>
<dbReference type="KEGG" id="xac:XAC1834"/>
<dbReference type="eggNOG" id="COG0107">
    <property type="taxonomic scope" value="Bacteria"/>
</dbReference>
<dbReference type="HOGENOM" id="CLU_048577_4_0_6"/>
<dbReference type="UniPathway" id="UPA00031">
    <property type="reaction ID" value="UER00010"/>
</dbReference>
<dbReference type="Proteomes" id="UP000000576">
    <property type="component" value="Chromosome"/>
</dbReference>
<dbReference type="GO" id="GO:0005737">
    <property type="term" value="C:cytoplasm"/>
    <property type="evidence" value="ECO:0007669"/>
    <property type="project" value="UniProtKB-SubCell"/>
</dbReference>
<dbReference type="GO" id="GO:0000107">
    <property type="term" value="F:imidazoleglycerol-phosphate synthase activity"/>
    <property type="evidence" value="ECO:0007669"/>
    <property type="project" value="UniProtKB-UniRule"/>
</dbReference>
<dbReference type="GO" id="GO:0016829">
    <property type="term" value="F:lyase activity"/>
    <property type="evidence" value="ECO:0007669"/>
    <property type="project" value="UniProtKB-KW"/>
</dbReference>
<dbReference type="GO" id="GO:0000105">
    <property type="term" value="P:L-histidine biosynthetic process"/>
    <property type="evidence" value="ECO:0007669"/>
    <property type="project" value="UniProtKB-UniRule"/>
</dbReference>
<dbReference type="CDD" id="cd04731">
    <property type="entry name" value="HisF"/>
    <property type="match status" value="1"/>
</dbReference>
<dbReference type="FunFam" id="3.20.20.70:FF:000006">
    <property type="entry name" value="Imidazole glycerol phosphate synthase subunit HisF"/>
    <property type="match status" value="1"/>
</dbReference>
<dbReference type="Gene3D" id="3.20.20.70">
    <property type="entry name" value="Aldolase class I"/>
    <property type="match status" value="1"/>
</dbReference>
<dbReference type="HAMAP" id="MF_01013">
    <property type="entry name" value="HisF"/>
    <property type="match status" value="1"/>
</dbReference>
<dbReference type="InterPro" id="IPR013785">
    <property type="entry name" value="Aldolase_TIM"/>
</dbReference>
<dbReference type="InterPro" id="IPR006062">
    <property type="entry name" value="His_biosynth"/>
</dbReference>
<dbReference type="InterPro" id="IPR004651">
    <property type="entry name" value="HisF"/>
</dbReference>
<dbReference type="InterPro" id="IPR050064">
    <property type="entry name" value="IGPS_HisA/HisF"/>
</dbReference>
<dbReference type="InterPro" id="IPR011060">
    <property type="entry name" value="RibuloseP-bd_barrel"/>
</dbReference>
<dbReference type="NCBIfam" id="TIGR00735">
    <property type="entry name" value="hisF"/>
    <property type="match status" value="1"/>
</dbReference>
<dbReference type="PANTHER" id="PTHR21235:SF2">
    <property type="entry name" value="IMIDAZOLE GLYCEROL PHOSPHATE SYNTHASE HISHF"/>
    <property type="match status" value="1"/>
</dbReference>
<dbReference type="PANTHER" id="PTHR21235">
    <property type="entry name" value="IMIDAZOLE GLYCEROL PHOSPHATE SYNTHASE SUBUNIT HISF/H IGP SYNTHASE SUBUNIT HISF/H"/>
    <property type="match status" value="1"/>
</dbReference>
<dbReference type="Pfam" id="PF00977">
    <property type="entry name" value="His_biosynth"/>
    <property type="match status" value="1"/>
</dbReference>
<dbReference type="SUPFAM" id="SSF51366">
    <property type="entry name" value="Ribulose-phoshate binding barrel"/>
    <property type="match status" value="1"/>
</dbReference>
<evidence type="ECO:0000255" key="1">
    <source>
        <dbReference type="HAMAP-Rule" id="MF_01013"/>
    </source>
</evidence>
<comment type="function">
    <text evidence="1">IGPS catalyzes the conversion of PRFAR and glutamine to IGP, AICAR and glutamate. The HisF subunit catalyzes the cyclization activity that produces IGP and AICAR from PRFAR using the ammonia provided by the HisH subunit.</text>
</comment>
<comment type="catalytic activity">
    <reaction evidence="1">
        <text>5-[(5-phospho-1-deoxy-D-ribulos-1-ylimino)methylamino]-1-(5-phospho-beta-D-ribosyl)imidazole-4-carboxamide + L-glutamine = D-erythro-1-(imidazol-4-yl)glycerol 3-phosphate + 5-amino-1-(5-phospho-beta-D-ribosyl)imidazole-4-carboxamide + L-glutamate + H(+)</text>
        <dbReference type="Rhea" id="RHEA:24793"/>
        <dbReference type="ChEBI" id="CHEBI:15378"/>
        <dbReference type="ChEBI" id="CHEBI:29985"/>
        <dbReference type="ChEBI" id="CHEBI:58278"/>
        <dbReference type="ChEBI" id="CHEBI:58359"/>
        <dbReference type="ChEBI" id="CHEBI:58475"/>
        <dbReference type="ChEBI" id="CHEBI:58525"/>
        <dbReference type="EC" id="4.3.2.10"/>
    </reaction>
</comment>
<comment type="pathway">
    <text evidence="1">Amino-acid biosynthesis; L-histidine biosynthesis; L-histidine from 5-phospho-alpha-D-ribose 1-diphosphate: step 5/9.</text>
</comment>
<comment type="subunit">
    <text evidence="1">Heterodimer of HisH and HisF.</text>
</comment>
<comment type="subcellular location">
    <subcellularLocation>
        <location evidence="1">Cytoplasm</location>
    </subcellularLocation>
</comment>
<comment type="similarity">
    <text evidence="1">Belongs to the HisA/HisF family.</text>
</comment>
<gene>
    <name evidence="1" type="primary">hisF</name>
    <name type="ordered locus">XAC1834</name>
</gene>
<feature type="chain" id="PRO_0000142265" description="Imidazole glycerol phosphate synthase subunit HisF">
    <location>
        <begin position="1"/>
        <end position="258"/>
    </location>
</feature>
<feature type="active site" evidence="1">
    <location>
        <position position="11"/>
    </location>
</feature>
<feature type="active site" evidence="1">
    <location>
        <position position="130"/>
    </location>
</feature>
<sequence>MLSRRIIPCLDVRDGRVVKGVKFRDHIDMGDIVELALRYRAQGADELVFYDIGASPEGRSVDYTWVERVARLIDIPFCVAGGIGDVETARAVLHAGADKISINSPALGRPQLISELADAFGVQCVVVGIDSIREEDGQWRVRRYTGDPSKTQALPMRTLDWVAEAQRLGAGEMVLNCMDNDGVRRGYDIAQLRQVRALCRVPLIASGGAGDMQHFADVFDQADVDGALAASVFHSGAIPIPELKQFLRAQQIEVRDGQ</sequence>
<reference key="1">
    <citation type="journal article" date="2002" name="Nature">
        <title>Comparison of the genomes of two Xanthomonas pathogens with differing host specificities.</title>
        <authorList>
            <person name="da Silva A.C.R."/>
            <person name="Ferro J.A."/>
            <person name="Reinach F.C."/>
            <person name="Farah C.S."/>
            <person name="Furlan L.R."/>
            <person name="Quaggio R.B."/>
            <person name="Monteiro-Vitorello C.B."/>
            <person name="Van Sluys M.A."/>
            <person name="Almeida N.F. Jr."/>
            <person name="Alves L.M.C."/>
            <person name="do Amaral A.M."/>
            <person name="Bertolini M.C."/>
            <person name="Camargo L.E.A."/>
            <person name="Camarotte G."/>
            <person name="Cannavan F."/>
            <person name="Cardozo J."/>
            <person name="Chambergo F."/>
            <person name="Ciapina L.P."/>
            <person name="Cicarelli R.M.B."/>
            <person name="Coutinho L.L."/>
            <person name="Cursino-Santos J.R."/>
            <person name="El-Dorry H."/>
            <person name="Faria J.B."/>
            <person name="Ferreira A.J.S."/>
            <person name="Ferreira R.C.C."/>
            <person name="Ferro M.I.T."/>
            <person name="Formighieri E.F."/>
            <person name="Franco M.C."/>
            <person name="Greggio C.C."/>
            <person name="Gruber A."/>
            <person name="Katsuyama A.M."/>
            <person name="Kishi L.T."/>
            <person name="Leite R.P."/>
            <person name="Lemos E.G.M."/>
            <person name="Lemos M.V.F."/>
            <person name="Locali E.C."/>
            <person name="Machado M.A."/>
            <person name="Madeira A.M.B.N."/>
            <person name="Martinez-Rossi N.M."/>
            <person name="Martins E.C."/>
            <person name="Meidanis J."/>
            <person name="Menck C.F.M."/>
            <person name="Miyaki C.Y."/>
            <person name="Moon D.H."/>
            <person name="Moreira L.M."/>
            <person name="Novo M.T.M."/>
            <person name="Okura V.K."/>
            <person name="Oliveira M.C."/>
            <person name="Oliveira V.R."/>
            <person name="Pereira H.A."/>
            <person name="Rossi A."/>
            <person name="Sena J.A.D."/>
            <person name="Silva C."/>
            <person name="de Souza R.F."/>
            <person name="Spinola L.A.F."/>
            <person name="Takita M.A."/>
            <person name="Tamura R.E."/>
            <person name="Teixeira E.C."/>
            <person name="Tezza R.I.D."/>
            <person name="Trindade dos Santos M."/>
            <person name="Truffi D."/>
            <person name="Tsai S.M."/>
            <person name="White F.F."/>
            <person name="Setubal J.C."/>
            <person name="Kitajima J.P."/>
        </authorList>
    </citation>
    <scope>NUCLEOTIDE SEQUENCE [LARGE SCALE GENOMIC DNA]</scope>
    <source>
        <strain>306</strain>
    </source>
</reference>
<proteinExistence type="inferred from homology"/>
<name>HIS6_XANAC</name>
<protein>
    <recommendedName>
        <fullName evidence="1">Imidazole glycerol phosphate synthase subunit HisF</fullName>
        <ecNumber evidence="1">4.3.2.10</ecNumber>
    </recommendedName>
    <alternativeName>
        <fullName evidence="1">IGP synthase cyclase subunit</fullName>
    </alternativeName>
    <alternativeName>
        <fullName evidence="1">IGP synthase subunit HisF</fullName>
    </alternativeName>
    <alternativeName>
        <fullName evidence="1">ImGP synthase subunit HisF</fullName>
        <shortName evidence="1">IGPS subunit HisF</shortName>
    </alternativeName>
</protein>
<accession>Q8PLG6</accession>
<organism>
    <name type="scientific">Xanthomonas axonopodis pv. citri (strain 306)</name>
    <dbReference type="NCBI Taxonomy" id="190486"/>
    <lineage>
        <taxon>Bacteria</taxon>
        <taxon>Pseudomonadati</taxon>
        <taxon>Pseudomonadota</taxon>
        <taxon>Gammaproteobacteria</taxon>
        <taxon>Lysobacterales</taxon>
        <taxon>Lysobacteraceae</taxon>
        <taxon>Xanthomonas</taxon>
    </lineage>
</organism>
<keyword id="KW-0028">Amino-acid biosynthesis</keyword>
<keyword id="KW-0963">Cytoplasm</keyword>
<keyword id="KW-0368">Histidine biosynthesis</keyword>
<keyword id="KW-0456">Lyase</keyword>